<comment type="function">
    <text evidence="1">An accessory protein needed during the final step in the assembly of 30S ribosomal subunit, possibly for assembly of the head region. Essential for efficient processing of 16S rRNA. May be needed both before and after RbfA during the maturation of 16S rRNA. It has affinity for free ribosomal 30S subunits but not for 70S ribosomes.</text>
</comment>
<comment type="subunit">
    <text evidence="1">Binds ribosomal protein uS19.</text>
</comment>
<comment type="subcellular location">
    <subcellularLocation>
        <location evidence="1">Cytoplasm</location>
    </subcellularLocation>
</comment>
<comment type="domain">
    <text evidence="1">The PRC barrel domain binds ribosomal protein uS19.</text>
</comment>
<comment type="similarity">
    <text evidence="1">Belongs to the RimM family.</text>
</comment>
<sequence length="188" mass="19779">MAPTPDRDGQDKKVCLGVVTGAHGVRGLVRVKPYTEMPEGVAAYGPVETKDGATSFAISLKGMAKDLVICKLEGVDDRDVAAALRGTELYVPRERLPRASGDEEGWYYADLIGLRAVGLDGRDYGRIAGVENFGAGDLLEIAPAEGGQTVLMGFTDENVPEVDIAGGRVVIDPPAGTFGDDAEAERGE</sequence>
<keyword id="KW-0143">Chaperone</keyword>
<keyword id="KW-0963">Cytoplasm</keyword>
<keyword id="KW-1185">Reference proteome</keyword>
<keyword id="KW-0690">Ribosome biogenesis</keyword>
<keyword id="KW-0698">rRNA processing</keyword>
<proteinExistence type="inferred from homology"/>
<organism>
    <name type="scientific">Parvibaculum lavamentivorans (strain DS-1 / DSM 13023 / NCIMB 13966)</name>
    <dbReference type="NCBI Taxonomy" id="402881"/>
    <lineage>
        <taxon>Bacteria</taxon>
        <taxon>Pseudomonadati</taxon>
        <taxon>Pseudomonadota</taxon>
        <taxon>Alphaproteobacteria</taxon>
        <taxon>Hyphomicrobiales</taxon>
        <taxon>Parvibaculaceae</taxon>
        <taxon>Parvibaculum</taxon>
    </lineage>
</organism>
<protein>
    <recommendedName>
        <fullName evidence="1">Ribosome maturation factor RimM</fullName>
    </recommendedName>
</protein>
<reference key="1">
    <citation type="journal article" date="2011" name="Stand. Genomic Sci.">
        <title>Complete genome sequence of Parvibaculum lavamentivorans type strain (DS-1(T)).</title>
        <authorList>
            <person name="Schleheck D."/>
            <person name="Weiss M."/>
            <person name="Pitluck S."/>
            <person name="Bruce D."/>
            <person name="Land M.L."/>
            <person name="Han S."/>
            <person name="Saunders E."/>
            <person name="Tapia R."/>
            <person name="Detter C."/>
            <person name="Brettin T."/>
            <person name="Han J."/>
            <person name="Woyke T."/>
            <person name="Goodwin L."/>
            <person name="Pennacchio L."/>
            <person name="Nolan M."/>
            <person name="Cook A.M."/>
            <person name="Kjelleberg S."/>
            <person name="Thomas T."/>
        </authorList>
    </citation>
    <scope>NUCLEOTIDE SEQUENCE [LARGE SCALE GENOMIC DNA]</scope>
    <source>
        <strain>DS-1 / DSM 13023 / NCIMB 13966</strain>
    </source>
</reference>
<name>RIMM_PARL1</name>
<gene>
    <name evidence="1" type="primary">rimM</name>
    <name type="ordered locus">Plav_1420</name>
</gene>
<dbReference type="EMBL" id="CP000774">
    <property type="protein sequence ID" value="ABS63040.1"/>
    <property type="molecule type" value="Genomic_DNA"/>
</dbReference>
<dbReference type="RefSeq" id="WP_012110317.1">
    <property type="nucleotide sequence ID" value="NC_009719.1"/>
</dbReference>
<dbReference type="SMR" id="A7HT07"/>
<dbReference type="STRING" id="402881.Plav_1420"/>
<dbReference type="KEGG" id="pla:Plav_1420"/>
<dbReference type="eggNOG" id="COG0806">
    <property type="taxonomic scope" value="Bacteria"/>
</dbReference>
<dbReference type="HOGENOM" id="CLU_077636_0_1_5"/>
<dbReference type="OrthoDB" id="9788191at2"/>
<dbReference type="Proteomes" id="UP000006377">
    <property type="component" value="Chromosome"/>
</dbReference>
<dbReference type="GO" id="GO:0005737">
    <property type="term" value="C:cytoplasm"/>
    <property type="evidence" value="ECO:0007669"/>
    <property type="project" value="UniProtKB-SubCell"/>
</dbReference>
<dbReference type="GO" id="GO:0005840">
    <property type="term" value="C:ribosome"/>
    <property type="evidence" value="ECO:0007669"/>
    <property type="project" value="InterPro"/>
</dbReference>
<dbReference type="GO" id="GO:0043022">
    <property type="term" value="F:ribosome binding"/>
    <property type="evidence" value="ECO:0007669"/>
    <property type="project" value="InterPro"/>
</dbReference>
<dbReference type="GO" id="GO:0042274">
    <property type="term" value="P:ribosomal small subunit biogenesis"/>
    <property type="evidence" value="ECO:0007669"/>
    <property type="project" value="UniProtKB-UniRule"/>
</dbReference>
<dbReference type="GO" id="GO:0006364">
    <property type="term" value="P:rRNA processing"/>
    <property type="evidence" value="ECO:0007669"/>
    <property type="project" value="UniProtKB-UniRule"/>
</dbReference>
<dbReference type="Gene3D" id="2.30.30.240">
    <property type="entry name" value="PRC-barrel domain"/>
    <property type="match status" value="1"/>
</dbReference>
<dbReference type="Gene3D" id="2.40.30.60">
    <property type="entry name" value="RimM"/>
    <property type="match status" value="1"/>
</dbReference>
<dbReference type="HAMAP" id="MF_00014">
    <property type="entry name" value="Ribosome_mat_RimM"/>
    <property type="match status" value="1"/>
</dbReference>
<dbReference type="InterPro" id="IPR011033">
    <property type="entry name" value="PRC_barrel-like_sf"/>
</dbReference>
<dbReference type="InterPro" id="IPR056792">
    <property type="entry name" value="PRC_RimM"/>
</dbReference>
<dbReference type="InterPro" id="IPR011961">
    <property type="entry name" value="RimM"/>
</dbReference>
<dbReference type="InterPro" id="IPR002676">
    <property type="entry name" value="RimM_N"/>
</dbReference>
<dbReference type="InterPro" id="IPR036976">
    <property type="entry name" value="RimM_N_sf"/>
</dbReference>
<dbReference type="InterPro" id="IPR009000">
    <property type="entry name" value="Transl_B-barrel_sf"/>
</dbReference>
<dbReference type="NCBIfam" id="TIGR02273">
    <property type="entry name" value="16S_RimM"/>
    <property type="match status" value="1"/>
</dbReference>
<dbReference type="PANTHER" id="PTHR33692">
    <property type="entry name" value="RIBOSOME MATURATION FACTOR RIMM"/>
    <property type="match status" value="1"/>
</dbReference>
<dbReference type="PANTHER" id="PTHR33692:SF1">
    <property type="entry name" value="RIBOSOME MATURATION FACTOR RIMM"/>
    <property type="match status" value="1"/>
</dbReference>
<dbReference type="Pfam" id="PF24986">
    <property type="entry name" value="PRC_RimM"/>
    <property type="match status" value="1"/>
</dbReference>
<dbReference type="Pfam" id="PF01782">
    <property type="entry name" value="RimM"/>
    <property type="match status" value="1"/>
</dbReference>
<dbReference type="SUPFAM" id="SSF50346">
    <property type="entry name" value="PRC-barrel domain"/>
    <property type="match status" value="1"/>
</dbReference>
<dbReference type="SUPFAM" id="SSF50447">
    <property type="entry name" value="Translation proteins"/>
    <property type="match status" value="1"/>
</dbReference>
<feature type="chain" id="PRO_0000321744" description="Ribosome maturation factor RimM">
    <location>
        <begin position="1"/>
        <end position="188"/>
    </location>
</feature>
<feature type="domain" description="PRC barrel" evidence="1">
    <location>
        <begin position="103"/>
        <end position="177"/>
    </location>
</feature>
<accession>A7HT07</accession>
<evidence type="ECO:0000255" key="1">
    <source>
        <dbReference type="HAMAP-Rule" id="MF_00014"/>
    </source>
</evidence>